<dbReference type="EC" id="4.2.1.11" evidence="1"/>
<dbReference type="EMBL" id="CP000086">
    <property type="protein sequence ID" value="ABC39328.1"/>
    <property type="molecule type" value="Genomic_DNA"/>
</dbReference>
<dbReference type="RefSeq" id="WP_009890193.1">
    <property type="nucleotide sequence ID" value="NZ_CP008785.1"/>
</dbReference>
<dbReference type="SMR" id="Q2SXC5"/>
<dbReference type="GeneID" id="45121626"/>
<dbReference type="KEGG" id="bte:BTH_I1894"/>
<dbReference type="HOGENOM" id="CLU_031223_2_1_4"/>
<dbReference type="UniPathway" id="UPA00109">
    <property type="reaction ID" value="UER00187"/>
</dbReference>
<dbReference type="Proteomes" id="UP000001930">
    <property type="component" value="Chromosome I"/>
</dbReference>
<dbReference type="GO" id="GO:0009986">
    <property type="term" value="C:cell surface"/>
    <property type="evidence" value="ECO:0007669"/>
    <property type="project" value="UniProtKB-SubCell"/>
</dbReference>
<dbReference type="GO" id="GO:0005576">
    <property type="term" value="C:extracellular region"/>
    <property type="evidence" value="ECO:0007669"/>
    <property type="project" value="UniProtKB-SubCell"/>
</dbReference>
<dbReference type="GO" id="GO:0000015">
    <property type="term" value="C:phosphopyruvate hydratase complex"/>
    <property type="evidence" value="ECO:0007669"/>
    <property type="project" value="InterPro"/>
</dbReference>
<dbReference type="GO" id="GO:0000287">
    <property type="term" value="F:magnesium ion binding"/>
    <property type="evidence" value="ECO:0007669"/>
    <property type="project" value="UniProtKB-UniRule"/>
</dbReference>
<dbReference type="GO" id="GO:0004634">
    <property type="term" value="F:phosphopyruvate hydratase activity"/>
    <property type="evidence" value="ECO:0007669"/>
    <property type="project" value="UniProtKB-UniRule"/>
</dbReference>
<dbReference type="GO" id="GO:0006096">
    <property type="term" value="P:glycolytic process"/>
    <property type="evidence" value="ECO:0007669"/>
    <property type="project" value="UniProtKB-UniRule"/>
</dbReference>
<dbReference type="CDD" id="cd03313">
    <property type="entry name" value="enolase"/>
    <property type="match status" value="1"/>
</dbReference>
<dbReference type="FunFam" id="3.20.20.120:FF:000001">
    <property type="entry name" value="Enolase"/>
    <property type="match status" value="1"/>
</dbReference>
<dbReference type="FunFam" id="3.30.390.10:FF:000001">
    <property type="entry name" value="Enolase"/>
    <property type="match status" value="1"/>
</dbReference>
<dbReference type="Gene3D" id="3.20.20.120">
    <property type="entry name" value="Enolase-like C-terminal domain"/>
    <property type="match status" value="1"/>
</dbReference>
<dbReference type="Gene3D" id="3.30.390.10">
    <property type="entry name" value="Enolase-like, N-terminal domain"/>
    <property type="match status" value="1"/>
</dbReference>
<dbReference type="HAMAP" id="MF_00318">
    <property type="entry name" value="Enolase"/>
    <property type="match status" value="1"/>
</dbReference>
<dbReference type="InterPro" id="IPR000941">
    <property type="entry name" value="Enolase"/>
</dbReference>
<dbReference type="InterPro" id="IPR036849">
    <property type="entry name" value="Enolase-like_C_sf"/>
</dbReference>
<dbReference type="InterPro" id="IPR029017">
    <property type="entry name" value="Enolase-like_N"/>
</dbReference>
<dbReference type="InterPro" id="IPR020810">
    <property type="entry name" value="Enolase_C"/>
</dbReference>
<dbReference type="InterPro" id="IPR020809">
    <property type="entry name" value="Enolase_CS"/>
</dbReference>
<dbReference type="InterPro" id="IPR020811">
    <property type="entry name" value="Enolase_N"/>
</dbReference>
<dbReference type="NCBIfam" id="TIGR01060">
    <property type="entry name" value="eno"/>
    <property type="match status" value="1"/>
</dbReference>
<dbReference type="PANTHER" id="PTHR11902">
    <property type="entry name" value="ENOLASE"/>
    <property type="match status" value="1"/>
</dbReference>
<dbReference type="PANTHER" id="PTHR11902:SF1">
    <property type="entry name" value="ENOLASE"/>
    <property type="match status" value="1"/>
</dbReference>
<dbReference type="Pfam" id="PF00113">
    <property type="entry name" value="Enolase_C"/>
    <property type="match status" value="1"/>
</dbReference>
<dbReference type="Pfam" id="PF03952">
    <property type="entry name" value="Enolase_N"/>
    <property type="match status" value="1"/>
</dbReference>
<dbReference type="PIRSF" id="PIRSF001400">
    <property type="entry name" value="Enolase"/>
    <property type="match status" value="1"/>
</dbReference>
<dbReference type="PRINTS" id="PR00148">
    <property type="entry name" value="ENOLASE"/>
</dbReference>
<dbReference type="SFLD" id="SFLDF00002">
    <property type="entry name" value="enolase"/>
    <property type="match status" value="1"/>
</dbReference>
<dbReference type="SFLD" id="SFLDG00178">
    <property type="entry name" value="enolase"/>
    <property type="match status" value="1"/>
</dbReference>
<dbReference type="SMART" id="SM01192">
    <property type="entry name" value="Enolase_C"/>
    <property type="match status" value="1"/>
</dbReference>
<dbReference type="SMART" id="SM01193">
    <property type="entry name" value="Enolase_N"/>
    <property type="match status" value="1"/>
</dbReference>
<dbReference type="SUPFAM" id="SSF51604">
    <property type="entry name" value="Enolase C-terminal domain-like"/>
    <property type="match status" value="1"/>
</dbReference>
<dbReference type="SUPFAM" id="SSF54826">
    <property type="entry name" value="Enolase N-terminal domain-like"/>
    <property type="match status" value="1"/>
</dbReference>
<dbReference type="PROSITE" id="PS00164">
    <property type="entry name" value="ENOLASE"/>
    <property type="match status" value="1"/>
</dbReference>
<feature type="chain" id="PRO_0000267010" description="Enolase">
    <location>
        <begin position="1"/>
        <end position="427"/>
    </location>
</feature>
<feature type="active site" description="Proton donor" evidence="1">
    <location>
        <position position="205"/>
    </location>
</feature>
<feature type="active site" description="Proton acceptor" evidence="1">
    <location>
        <position position="337"/>
    </location>
</feature>
<feature type="binding site" evidence="1">
    <location>
        <position position="163"/>
    </location>
    <ligand>
        <name>(2R)-2-phosphoglycerate</name>
        <dbReference type="ChEBI" id="CHEBI:58289"/>
    </ligand>
</feature>
<feature type="binding site" evidence="1">
    <location>
        <position position="242"/>
    </location>
    <ligand>
        <name>Mg(2+)</name>
        <dbReference type="ChEBI" id="CHEBI:18420"/>
    </ligand>
</feature>
<feature type="binding site" evidence="1">
    <location>
        <position position="285"/>
    </location>
    <ligand>
        <name>Mg(2+)</name>
        <dbReference type="ChEBI" id="CHEBI:18420"/>
    </ligand>
</feature>
<feature type="binding site" evidence="1">
    <location>
        <position position="312"/>
    </location>
    <ligand>
        <name>Mg(2+)</name>
        <dbReference type="ChEBI" id="CHEBI:18420"/>
    </ligand>
</feature>
<feature type="binding site" evidence="1">
    <location>
        <position position="337"/>
    </location>
    <ligand>
        <name>(2R)-2-phosphoglycerate</name>
        <dbReference type="ChEBI" id="CHEBI:58289"/>
    </ligand>
</feature>
<feature type="binding site" evidence="1">
    <location>
        <position position="366"/>
    </location>
    <ligand>
        <name>(2R)-2-phosphoglycerate</name>
        <dbReference type="ChEBI" id="CHEBI:58289"/>
    </ligand>
</feature>
<feature type="binding site" evidence="1">
    <location>
        <position position="367"/>
    </location>
    <ligand>
        <name>(2R)-2-phosphoglycerate</name>
        <dbReference type="ChEBI" id="CHEBI:58289"/>
    </ligand>
</feature>
<feature type="binding site" evidence="1">
    <location>
        <position position="388"/>
    </location>
    <ligand>
        <name>(2R)-2-phosphoglycerate</name>
        <dbReference type="ChEBI" id="CHEBI:58289"/>
    </ligand>
</feature>
<comment type="function">
    <text evidence="1">Catalyzes the reversible conversion of 2-phosphoglycerate (2-PG) into phosphoenolpyruvate (PEP). It is essential for the degradation of carbohydrates via glycolysis.</text>
</comment>
<comment type="catalytic activity">
    <reaction evidence="1">
        <text>(2R)-2-phosphoglycerate = phosphoenolpyruvate + H2O</text>
        <dbReference type="Rhea" id="RHEA:10164"/>
        <dbReference type="ChEBI" id="CHEBI:15377"/>
        <dbReference type="ChEBI" id="CHEBI:58289"/>
        <dbReference type="ChEBI" id="CHEBI:58702"/>
        <dbReference type="EC" id="4.2.1.11"/>
    </reaction>
</comment>
<comment type="cofactor">
    <cofactor evidence="1">
        <name>Mg(2+)</name>
        <dbReference type="ChEBI" id="CHEBI:18420"/>
    </cofactor>
    <text evidence="1">Binds a second Mg(2+) ion via substrate during catalysis.</text>
</comment>
<comment type="pathway">
    <text evidence="1">Carbohydrate degradation; glycolysis; pyruvate from D-glyceraldehyde 3-phosphate: step 4/5.</text>
</comment>
<comment type="subcellular location">
    <subcellularLocation>
        <location evidence="1">Cytoplasm</location>
    </subcellularLocation>
    <subcellularLocation>
        <location evidence="1">Secreted</location>
    </subcellularLocation>
    <subcellularLocation>
        <location evidence="1">Cell surface</location>
    </subcellularLocation>
    <text evidence="1">Fractions of enolase are present in both the cytoplasm and on the cell surface.</text>
</comment>
<comment type="similarity">
    <text evidence="1">Belongs to the enolase family.</text>
</comment>
<accession>Q2SXC5</accession>
<sequence>MSAIVDIIGREILDSRGNPTVECDVLLESGTMGRAAVPSGASTGSREAIELRDGEAGRYNGKGVLKAVEHINTEISEAIMGLDASEQAFLDKTLLELDGTDNKSRLGANAMLAVSMAVAKAAAEEAGLPLYRYFGGSGAMQLPVPMMNIVNGGAHANNSLDIQEFMIVPVSQPTFREALRCGAEVFHALKKILGDRGMSTAVGDEGGFAPNFGSNDECLSTILQAIEKAGYRAGEDVLLALDCAASEFYHDGKYQLAGEGLQLSSAEFSDYLATLADKFPIVSIEDGMHESDWDGWKLLTDRLGKKVQLVGDDLFVTNTRILKEGIEKGIANSILIKINQIGTLTETFAAIEMAKRARYTAVISHRSGETEDSTIADIAVGLNAGQIKTGSLSRSDRISKYNQLLRIEEDLGDIASYPGKSAFYNLR</sequence>
<organism>
    <name type="scientific">Burkholderia thailandensis (strain ATCC 700388 / DSM 13276 / CCUG 48851 / CIP 106301 / E264)</name>
    <dbReference type="NCBI Taxonomy" id="271848"/>
    <lineage>
        <taxon>Bacteria</taxon>
        <taxon>Pseudomonadati</taxon>
        <taxon>Pseudomonadota</taxon>
        <taxon>Betaproteobacteria</taxon>
        <taxon>Burkholderiales</taxon>
        <taxon>Burkholderiaceae</taxon>
        <taxon>Burkholderia</taxon>
        <taxon>pseudomallei group</taxon>
    </lineage>
</organism>
<gene>
    <name evidence="1" type="primary">eno</name>
    <name type="ordered locus">BTH_I1894</name>
</gene>
<keyword id="KW-0963">Cytoplasm</keyword>
<keyword id="KW-0324">Glycolysis</keyword>
<keyword id="KW-0456">Lyase</keyword>
<keyword id="KW-0460">Magnesium</keyword>
<keyword id="KW-0479">Metal-binding</keyword>
<keyword id="KW-0964">Secreted</keyword>
<evidence type="ECO:0000255" key="1">
    <source>
        <dbReference type="HAMAP-Rule" id="MF_00318"/>
    </source>
</evidence>
<protein>
    <recommendedName>
        <fullName evidence="1">Enolase</fullName>
        <ecNumber evidence="1">4.2.1.11</ecNumber>
    </recommendedName>
    <alternativeName>
        <fullName evidence="1">2-phospho-D-glycerate hydro-lyase</fullName>
    </alternativeName>
    <alternativeName>
        <fullName evidence="1">2-phosphoglycerate dehydratase</fullName>
    </alternativeName>
</protein>
<name>ENO_BURTA</name>
<reference key="1">
    <citation type="journal article" date="2005" name="BMC Genomics">
        <title>Bacterial genome adaptation to niches: divergence of the potential virulence genes in three Burkholderia species of different survival strategies.</title>
        <authorList>
            <person name="Kim H.S."/>
            <person name="Schell M.A."/>
            <person name="Yu Y."/>
            <person name="Ulrich R.L."/>
            <person name="Sarria S.H."/>
            <person name="Nierman W.C."/>
            <person name="DeShazer D."/>
        </authorList>
    </citation>
    <scope>NUCLEOTIDE SEQUENCE [LARGE SCALE GENOMIC DNA]</scope>
    <source>
        <strain>ATCC 700388 / DSM 13276 / CCUG 48851 / CIP 106301 / E264</strain>
    </source>
</reference>
<proteinExistence type="inferred from homology"/>